<dbReference type="EC" id="5.1.1.20"/>
<dbReference type="EMBL" id="AE015928">
    <property type="protein sequence ID" value="AAO76420.1"/>
    <property type="molecule type" value="Genomic_DNA"/>
</dbReference>
<dbReference type="RefSeq" id="NP_810226.1">
    <property type="nucleotide sequence ID" value="NC_004663.1"/>
</dbReference>
<dbReference type="RefSeq" id="WP_011107704.1">
    <property type="nucleotide sequence ID" value="NC_004663.1"/>
</dbReference>
<dbReference type="PDB" id="3IJI">
    <property type="method" value="X-ray"/>
    <property type="resolution" value="1.60 A"/>
    <property type="chains" value="A/B=46-383"/>
</dbReference>
<dbReference type="PDB" id="3IJL">
    <property type="method" value="X-ray"/>
    <property type="resolution" value="1.50 A"/>
    <property type="chains" value="A/B=46-383"/>
</dbReference>
<dbReference type="PDB" id="3IJQ">
    <property type="method" value="X-ray"/>
    <property type="resolution" value="2.00 A"/>
    <property type="chains" value="A/B=46-383"/>
</dbReference>
<dbReference type="PDBsum" id="3IJI"/>
<dbReference type="PDBsum" id="3IJL"/>
<dbReference type="PDBsum" id="3IJQ"/>
<dbReference type="SMR" id="Q8A861"/>
<dbReference type="FunCoup" id="Q8A861">
    <property type="interactions" value="52"/>
</dbReference>
<dbReference type="STRING" id="226186.BT_1313"/>
<dbReference type="PaxDb" id="226186-BT_1313"/>
<dbReference type="EnsemblBacteria" id="AAO76420">
    <property type="protein sequence ID" value="AAO76420"/>
    <property type="gene ID" value="BT_1313"/>
</dbReference>
<dbReference type="GeneID" id="60927293"/>
<dbReference type="KEGG" id="bth:BT_1313"/>
<dbReference type="PATRIC" id="fig|226186.12.peg.1342"/>
<dbReference type="eggNOG" id="COG4948">
    <property type="taxonomic scope" value="Bacteria"/>
</dbReference>
<dbReference type="HOGENOM" id="CLU_030273_4_3_10"/>
<dbReference type="InParanoid" id="Q8A861"/>
<dbReference type="OrthoDB" id="9775391at2"/>
<dbReference type="EvolutionaryTrace" id="Q8A861"/>
<dbReference type="Proteomes" id="UP000001414">
    <property type="component" value="Chromosome"/>
</dbReference>
<dbReference type="GO" id="GO:0103031">
    <property type="term" value="F:L-Ala-D/L-Glu epimerase activity"/>
    <property type="evidence" value="ECO:0007669"/>
    <property type="project" value="UniProtKB-EC"/>
</dbReference>
<dbReference type="GO" id="GO:0000287">
    <property type="term" value="F:magnesium ion binding"/>
    <property type="evidence" value="ECO:0000314"/>
    <property type="project" value="UniProtKB"/>
</dbReference>
<dbReference type="GO" id="GO:0016854">
    <property type="term" value="F:racemase and epimerase activity"/>
    <property type="evidence" value="ECO:0000314"/>
    <property type="project" value="UniProtKB"/>
</dbReference>
<dbReference type="GO" id="GO:0071555">
    <property type="term" value="P:cell wall organization"/>
    <property type="evidence" value="ECO:0007669"/>
    <property type="project" value="UniProtKB-KW"/>
</dbReference>
<dbReference type="GO" id="GO:0006518">
    <property type="term" value="P:peptide metabolic process"/>
    <property type="evidence" value="ECO:0000314"/>
    <property type="project" value="UniProtKB"/>
</dbReference>
<dbReference type="CDD" id="cd03319">
    <property type="entry name" value="L-Ala-DL-Glu_epimerase"/>
    <property type="match status" value="1"/>
</dbReference>
<dbReference type="FunFam" id="3.20.20.120:FF:000019">
    <property type="entry name" value="Dipeptide epimerase"/>
    <property type="match status" value="1"/>
</dbReference>
<dbReference type="FunFam" id="3.30.390.10:FF:000009">
    <property type="entry name" value="Hydrophobic dipeptide epimerase"/>
    <property type="match status" value="1"/>
</dbReference>
<dbReference type="Gene3D" id="3.20.20.120">
    <property type="entry name" value="Enolase-like C-terminal domain"/>
    <property type="match status" value="1"/>
</dbReference>
<dbReference type="Gene3D" id="3.30.390.10">
    <property type="entry name" value="Enolase-like, N-terminal domain"/>
    <property type="match status" value="1"/>
</dbReference>
<dbReference type="InterPro" id="IPR034593">
    <property type="entry name" value="DgoD-like"/>
</dbReference>
<dbReference type="InterPro" id="IPR034603">
    <property type="entry name" value="Dipeptide_epimerase"/>
</dbReference>
<dbReference type="InterPro" id="IPR036849">
    <property type="entry name" value="Enolase-like_C_sf"/>
</dbReference>
<dbReference type="InterPro" id="IPR029017">
    <property type="entry name" value="Enolase-like_N"/>
</dbReference>
<dbReference type="InterPro" id="IPR029065">
    <property type="entry name" value="Enolase_C-like"/>
</dbReference>
<dbReference type="InterPro" id="IPR013342">
    <property type="entry name" value="Mandelate_racemase_C"/>
</dbReference>
<dbReference type="InterPro" id="IPR013341">
    <property type="entry name" value="Mandelate_racemase_N_dom"/>
</dbReference>
<dbReference type="InterPro" id="IPR006311">
    <property type="entry name" value="TAT_signal"/>
</dbReference>
<dbReference type="InterPro" id="IPR019546">
    <property type="entry name" value="TAT_signal_bac_arc"/>
</dbReference>
<dbReference type="NCBIfam" id="TIGR01409">
    <property type="entry name" value="TAT_signal_seq"/>
    <property type="match status" value="1"/>
</dbReference>
<dbReference type="PANTHER" id="PTHR48080">
    <property type="entry name" value="D-GALACTONATE DEHYDRATASE-RELATED"/>
    <property type="match status" value="1"/>
</dbReference>
<dbReference type="PANTHER" id="PTHR48080:SF3">
    <property type="entry name" value="ENOLASE SUPERFAMILY MEMBER DDB_G0284701"/>
    <property type="match status" value="1"/>
</dbReference>
<dbReference type="Pfam" id="PF13378">
    <property type="entry name" value="MR_MLE_C"/>
    <property type="match status" value="1"/>
</dbReference>
<dbReference type="Pfam" id="PF02746">
    <property type="entry name" value="MR_MLE_N"/>
    <property type="match status" value="1"/>
</dbReference>
<dbReference type="SFLD" id="SFLDF00010">
    <property type="entry name" value="dipeptide_epimerase"/>
    <property type="match status" value="1"/>
</dbReference>
<dbReference type="SFLD" id="SFLDG00180">
    <property type="entry name" value="muconate_cycloisomerase"/>
    <property type="match status" value="1"/>
</dbReference>
<dbReference type="SMART" id="SM00922">
    <property type="entry name" value="MR_MLE"/>
    <property type="match status" value="1"/>
</dbReference>
<dbReference type="SUPFAM" id="SSF51604">
    <property type="entry name" value="Enolase C-terminal domain-like"/>
    <property type="match status" value="1"/>
</dbReference>
<dbReference type="SUPFAM" id="SSF54826">
    <property type="entry name" value="Enolase N-terminal domain-like"/>
    <property type="match status" value="1"/>
</dbReference>
<dbReference type="PROSITE" id="PS51318">
    <property type="entry name" value="TAT"/>
    <property type="match status" value="1"/>
</dbReference>
<keyword id="KW-0002">3D-structure</keyword>
<keyword id="KW-0961">Cell wall biogenesis/degradation</keyword>
<keyword id="KW-0413">Isomerase</keyword>
<keyword id="KW-0460">Magnesium</keyword>
<keyword id="KW-0479">Metal-binding</keyword>
<keyword id="KW-1185">Reference proteome</keyword>
<feature type="chain" id="PRO_0000429646" description="L-Ala-D/L-Glu epimerase">
    <location>
        <begin position="1"/>
        <end position="383"/>
    </location>
</feature>
<feature type="binding site">
    <location>
        <position position="68"/>
    </location>
    <ligand>
        <name>substrate</name>
    </ligand>
</feature>
<feature type="binding site">
    <location>
        <position position="94"/>
    </location>
    <ligand>
        <name>substrate</name>
    </ligand>
</feature>
<feature type="binding site">
    <location>
        <begin position="198"/>
        <end position="200"/>
    </location>
    <ligand>
        <name>substrate</name>
    </ligand>
</feature>
<feature type="binding site" evidence="1">
    <location>
        <position position="224"/>
    </location>
    <ligand>
        <name>Mg(2+)</name>
        <dbReference type="ChEBI" id="CHEBI:18420"/>
    </ligand>
</feature>
<feature type="binding site" evidence="1">
    <location>
        <position position="251"/>
    </location>
    <ligand>
        <name>Mg(2+)</name>
        <dbReference type="ChEBI" id="CHEBI:18420"/>
    </ligand>
</feature>
<feature type="binding site" evidence="1">
    <location>
        <position position="276"/>
    </location>
    <ligand>
        <name>Mg(2+)</name>
        <dbReference type="ChEBI" id="CHEBI:18420"/>
    </ligand>
</feature>
<feature type="binding site">
    <location>
        <position position="298"/>
    </location>
    <ligand>
        <name>substrate</name>
    </ligand>
</feature>
<feature type="binding site">
    <location>
        <begin position="326"/>
        <end position="328"/>
    </location>
    <ligand>
        <name>substrate</name>
    </ligand>
</feature>
<feature type="binding site">
    <location>
        <begin position="348"/>
        <end position="350"/>
    </location>
    <ligand>
        <name>substrate</name>
    </ligand>
</feature>
<feature type="strand" evidence="4">
    <location>
        <begin position="48"/>
        <end position="52"/>
    </location>
</feature>
<feature type="strand" evidence="4">
    <location>
        <begin position="55"/>
        <end position="63"/>
    </location>
</feature>
<feature type="strand" evidence="4">
    <location>
        <begin position="66"/>
        <end position="71"/>
    </location>
</feature>
<feature type="strand" evidence="4">
    <location>
        <begin position="73"/>
        <end position="80"/>
    </location>
</feature>
<feature type="strand" evidence="4">
    <location>
        <begin position="83"/>
        <end position="90"/>
    </location>
</feature>
<feature type="helix" evidence="4">
    <location>
        <begin position="93"/>
        <end position="95"/>
    </location>
</feature>
<feature type="helix" evidence="4">
    <location>
        <begin position="99"/>
        <end position="106"/>
    </location>
</feature>
<feature type="helix" evidence="4">
    <location>
        <begin position="120"/>
        <end position="129"/>
    </location>
</feature>
<feature type="helix" evidence="4">
    <location>
        <begin position="135"/>
        <end position="153"/>
    </location>
</feature>
<feature type="helix" evidence="4">
    <location>
        <begin position="157"/>
        <end position="160"/>
    </location>
</feature>
<feature type="helix" evidence="4">
    <location>
        <begin position="165"/>
        <end position="167"/>
    </location>
</feature>
<feature type="helix" evidence="4">
    <location>
        <begin position="180"/>
        <end position="191"/>
    </location>
</feature>
<feature type="strand" evidence="4">
    <location>
        <begin position="195"/>
        <end position="200"/>
    </location>
</feature>
<feature type="strand" evidence="4">
    <location>
        <begin position="202"/>
        <end position="204"/>
    </location>
</feature>
<feature type="helix" evidence="4">
    <location>
        <begin position="206"/>
        <end position="214"/>
    </location>
</feature>
<feature type="strand" evidence="4">
    <location>
        <begin position="221"/>
        <end position="224"/>
    </location>
</feature>
<feature type="helix" evidence="4">
    <location>
        <begin position="232"/>
        <end position="244"/>
    </location>
</feature>
<feature type="strand" evidence="4">
    <location>
        <begin position="247"/>
        <end position="251"/>
    </location>
</feature>
<feature type="helix" evidence="3">
    <location>
        <begin position="256"/>
        <end position="258"/>
    </location>
</feature>
<feature type="helix" evidence="4">
    <location>
        <begin position="259"/>
        <end position="267"/>
    </location>
</feature>
<feature type="strand" evidence="4">
    <location>
        <begin position="273"/>
        <end position="276"/>
    </location>
</feature>
<feature type="helix" evidence="4">
    <location>
        <begin position="282"/>
        <end position="284"/>
    </location>
</feature>
<feature type="helix" evidence="4">
    <location>
        <begin position="286"/>
        <end position="288"/>
    </location>
</feature>
<feature type="turn" evidence="5">
    <location>
        <begin position="289"/>
        <end position="291"/>
    </location>
</feature>
<feature type="strand" evidence="4">
    <location>
        <begin position="292"/>
        <end position="297"/>
    </location>
</feature>
<feature type="helix" evidence="4">
    <location>
        <begin position="299"/>
        <end position="302"/>
    </location>
</feature>
<feature type="helix" evidence="4">
    <location>
        <begin position="305"/>
        <end position="317"/>
    </location>
</feature>
<feature type="strand" evidence="4">
    <location>
        <begin position="321"/>
        <end position="324"/>
    </location>
</feature>
<feature type="helix" evidence="4">
    <location>
        <begin position="331"/>
        <end position="338"/>
    </location>
</feature>
<feature type="helix" evidence="4">
    <location>
        <begin position="339"/>
        <end position="343"/>
    </location>
</feature>
<feature type="strand" evidence="4">
    <location>
        <begin position="345"/>
        <end position="347"/>
    </location>
</feature>
<feature type="helix" evidence="4">
    <location>
        <begin position="351"/>
        <end position="354"/>
    </location>
</feature>
<feature type="strand" evidence="4">
    <location>
        <begin position="364"/>
        <end position="366"/>
    </location>
</feature>
<feature type="strand" evidence="4">
    <location>
        <begin position="369"/>
        <end position="371"/>
    </location>
</feature>
<gene>
    <name type="ordered locus">BT_1313</name>
</gene>
<protein>
    <recommendedName>
        <fullName>L-Ala-D/L-Glu epimerase</fullName>
        <shortName>AE epimerase</shortName>
        <shortName>AEE</shortName>
        <ecNumber>5.1.1.20</ecNumber>
    </recommendedName>
</protein>
<evidence type="ECO:0000269" key="1">
    <source>
    </source>
</evidence>
<evidence type="ECO:0000305" key="2"/>
<evidence type="ECO:0007829" key="3">
    <source>
        <dbReference type="PDB" id="3IJI"/>
    </source>
</evidence>
<evidence type="ECO:0007829" key="4">
    <source>
        <dbReference type="PDB" id="3IJL"/>
    </source>
</evidence>
<evidence type="ECO:0007829" key="5">
    <source>
        <dbReference type="PDB" id="3IJQ"/>
    </source>
</evidence>
<accession>Q8A861</accession>
<reference key="1">
    <citation type="journal article" date="2003" name="Science">
        <title>A genomic view of the human-Bacteroides thetaiotaomicron symbiosis.</title>
        <authorList>
            <person name="Xu J."/>
            <person name="Bjursell M.K."/>
            <person name="Himrod J."/>
            <person name="Deng S."/>
            <person name="Carmichael L.K."/>
            <person name="Chiang H.C."/>
            <person name="Hooper L.V."/>
            <person name="Gordon J.I."/>
        </authorList>
    </citation>
    <scope>NUCLEOTIDE SEQUENCE [LARGE SCALE GENOMIC DNA]</scope>
    <source>
        <strain>ATCC 29148 / DSM 2079 / JCM 5827 / CCUG 10774 / NCTC 10582 / VPI-5482 / E50</strain>
    </source>
</reference>
<reference key="2">
    <citation type="journal article" date="2009" name="Proc. Natl. Acad. Sci. U.S.A.">
        <title>Characterizing a model human gut microbiota composed of members of its two dominant bacterial phyla.</title>
        <authorList>
            <person name="Mahowald M.A."/>
            <person name="Rey F.E."/>
            <person name="Seedorf H."/>
            <person name="Turnbaugh P.J."/>
            <person name="Fulton R.S."/>
            <person name="Wollam A."/>
            <person name="Shah N."/>
            <person name="Wang C."/>
            <person name="Magrini V."/>
            <person name="Wilson R.K."/>
            <person name="Cantarel B.L."/>
            <person name="Coutinho P.M."/>
            <person name="Henrissat B."/>
            <person name="Crock L.W."/>
            <person name="Russell A."/>
            <person name="Verberkmoes N.C."/>
            <person name="Hettich R.L."/>
            <person name="Gordon J.I."/>
        </authorList>
    </citation>
    <scope>NUCLEOTIDE SEQUENCE [LARGE SCALE GENOMIC DNA]</scope>
    <source>
        <strain>ATCC 29148 / DSM 2079 / JCM 5827 / CCUG 10774 / NCTC 10582 / VPI-5482 / E50</strain>
    </source>
</reference>
<reference key="3">
    <citation type="journal article" date="2012" name="Proc. Natl. Acad. Sci. U.S.A.">
        <title>Homology models guide discovery of diverse enzyme specificities among dipeptide epimerases in the enolase superfamily.</title>
        <authorList>
            <person name="Lukk T."/>
            <person name="Sakai A."/>
            <person name="Kalyanaraman C."/>
            <person name="Brown S.D."/>
            <person name="Imker H.J."/>
            <person name="Song L."/>
            <person name="Fedorov A.A."/>
            <person name="Fedorov E.V."/>
            <person name="Toro R."/>
            <person name="Hillerich B."/>
            <person name="Seidel R."/>
            <person name="Patskovsky Y."/>
            <person name="Vetting M.W."/>
            <person name="Nair S.K."/>
            <person name="Babbitt P.C."/>
            <person name="Almo S.C."/>
            <person name="Gerlt J.A."/>
            <person name="Jacobson M.P."/>
        </authorList>
    </citation>
    <scope>X-RAY CRYSTALLOGRAPHY (1.50 ANGSTROMS) OF 46-383 IN COMPLEX WITH DIPEPTIDE AND MAGNESIUM</scope>
    <scope>COFACTOR</scope>
    <scope>FUNCTION</scope>
    <scope>BIOPHYSICOCHEMICAL PROPERTIES</scope>
    <source>
        <strain>ATCC 29148 / DSM 2079 / JCM 5827 / CCUG 10774 / NCTC 10582 / VPI-5482 / E50</strain>
    </source>
</reference>
<organism>
    <name type="scientific">Bacteroides thetaiotaomicron (strain ATCC 29148 / DSM 2079 / JCM 5827 / CCUG 10774 / NCTC 10582 / VPI-5482 / E50)</name>
    <dbReference type="NCBI Taxonomy" id="226186"/>
    <lineage>
        <taxon>Bacteria</taxon>
        <taxon>Pseudomonadati</taxon>
        <taxon>Bacteroidota</taxon>
        <taxon>Bacteroidia</taxon>
        <taxon>Bacteroidales</taxon>
        <taxon>Bacteroidaceae</taxon>
        <taxon>Bacteroides</taxon>
    </lineage>
</organism>
<sequence length="383" mass="42168">MPNRRDFLKTAAFATLGSGIAVSQVLAGECMPSAIHINKYGIGGKMKMTFFPYELKLRHVFTVATYSRTTTPDVQVEIEYEGVTGYGEASMPPYLGETVESVMNFLKKVNLEQFSDPFQLEDILSYVDSLSPKDTAAKAAVDIALHDLVGKLLGAPWYKIWGLNKEKTPSTTFTIGIDTPDVVRAKTKECAGLFNILKVKLGRDNDKEMIETIRSVTDLPIAVDANQGWKDRQYALDMIHWLKEKGIVMIEQPMPKEQLDDIAWVTQQSPLPVFADESLQRLGDVAALKGAFTGINIKLMKCTGMREAWKMVTLAHALGMRVMVGCMTETSCAISAASQFSPAVDFADLDGNLLISNDRFKGVEVVNGKITLNDLPGIGVMKI</sequence>
<proteinExistence type="evidence at protein level"/>
<comment type="function">
    <text evidence="1">Catalyzes the epimerization of L-Ala-D-Glu to L-Ala-L-Glu and may play a role in the metabolism of the murein peptide, of which L-Ala-D-Glu is a component. Is also able to catalyze the epimerization of L-Ala-D-Asp, L-Ala-L-Glu, L-Ala-L-Ser, L-Ala-L-Pro, L-Ala-L-L-Val, L-Ala-L-Thr, L-Ala-L-Leu, L-Ala-L-Ile and L-Gly-L-Glu (in vitro).</text>
</comment>
<comment type="catalytic activity">
    <reaction>
        <text>L-alanyl-L-glutamate = L-alanyl-D-glutamate</text>
        <dbReference type="Rhea" id="RHEA:28394"/>
        <dbReference type="ChEBI" id="CHEBI:61395"/>
        <dbReference type="ChEBI" id="CHEBI:61396"/>
        <dbReference type="EC" id="5.1.1.20"/>
    </reaction>
</comment>
<comment type="cofactor">
    <cofactor evidence="1">
        <name>Mg(2+)</name>
        <dbReference type="ChEBI" id="CHEBI:18420"/>
    </cofactor>
    <text evidence="1">Binds 1 Mg(2+) ion per subunit.</text>
</comment>
<comment type="biophysicochemical properties">
    <kinetics>
        <KM evidence="1">2 mM for L-Ala-L-Glu</KM>
        <KM evidence="1">6 mM for L-Ala-D-Glu</KM>
        <KM evidence="1">1.7 mM for L-Val-L-Glu</KM>
        <KM evidence="1">4.4 mM for L-Val-D-Glu</KM>
        <text>kcat is 147 sec(-1) for epimerization of L-Ala-L-Glu. kcat is 59 sec(-1) for epimerization of L-Ala-D-Glu. kcat is 96 sec(-1) for epimerization of L-Val-L-Glu. kcat is 43 sec(-1) for epimerization of L-Val-D-Glu. kcat is 30 sec(-1) for epimerization of L-Ile-L-Glu.</text>
    </kinetics>
</comment>
<comment type="miscellaneous">
    <text>Part of a large, functionally divergent protein family. Protein modeling and substrate docking were used to predict the substrate specificity, prior to biochemical analysis.</text>
</comment>
<comment type="similarity">
    <text evidence="2">Belongs to the mandelate racemase/muconate lactonizing enzyme family.</text>
</comment>
<name>AEEP_BACTN</name>